<organism>
    <name type="scientific">Candida albicans (strain SC5314 / ATCC MYA-2876)</name>
    <name type="common">Yeast</name>
    <dbReference type="NCBI Taxonomy" id="237561"/>
    <lineage>
        <taxon>Eukaryota</taxon>
        <taxon>Fungi</taxon>
        <taxon>Dikarya</taxon>
        <taxon>Ascomycota</taxon>
        <taxon>Saccharomycotina</taxon>
        <taxon>Pichiomycetes</taxon>
        <taxon>Debaryomycetaceae</taxon>
        <taxon>Candida/Lodderomyces clade</taxon>
        <taxon>Candida</taxon>
    </lineage>
</organism>
<comment type="function">
    <text evidence="1">Component of the post-replicative DNA mismatch repair system (MMR). Heterodimerizes with MSH2 to form MutS beta, which binds to DNA mismatches thereby initiating DNA repair. MSH3 provides substrate-binding and substrate specificity to the complex. When bound, the MutS beta heterodimer bends the DNA helix and shields approximately 20 base pairs. Acts mainly to repair insertion-deletion loops (IDLs) from 2 to 13 nucleotides in size, but can also repair base-base and single insertion-deletion mismatches that occur during replication. After mismatch binding, forms a ternary complex with the MutL alpha heterodimer, which is thought to be responsible for directing the downstream MMR events, including strand discrimination, excision, and resynthesis. ATP binding and hydrolysis play a pivotal role in mismatch repair functions (By similarity).</text>
</comment>
<comment type="subunit">
    <text evidence="1">Heterodimer consisting of MSH2-MSH3 (MutS beta). Forms a ternary complex with MutL alpha (MLH1-PMS1) (By similarity).</text>
</comment>
<comment type="subcellular location">
    <subcellularLocation>
        <location evidence="1">Nucleus</location>
    </subcellularLocation>
</comment>
<comment type="similarity">
    <text evidence="4">Belongs to the DNA mismatch repair MutS family. MSH3 subfamily.</text>
</comment>
<protein>
    <recommendedName>
        <fullName>DNA mismatch repair protein MSH3</fullName>
    </recommendedName>
    <alternativeName>
        <fullName>MutS protein homolog 3</fullName>
    </alternativeName>
</protein>
<dbReference type="EMBL" id="CP017624">
    <property type="protein sequence ID" value="AOW27856.1"/>
    <property type="molecule type" value="Genomic_DNA"/>
</dbReference>
<dbReference type="RefSeq" id="XP_714452.1">
    <property type="nucleotide sequence ID" value="XM_709359.1"/>
</dbReference>
<dbReference type="SMR" id="Q59Y41"/>
<dbReference type="BioGRID" id="1226940">
    <property type="interactions" value="1"/>
</dbReference>
<dbReference type="FunCoup" id="Q59Y41">
    <property type="interactions" value="834"/>
</dbReference>
<dbReference type="STRING" id="237561.Q59Y41"/>
<dbReference type="EnsemblFungi" id="C2_08680W_A-T">
    <property type="protein sequence ID" value="C2_08680W_A-T-p1"/>
    <property type="gene ID" value="C2_08680W_A"/>
</dbReference>
<dbReference type="GeneID" id="3643889"/>
<dbReference type="KEGG" id="cal:CAALFM_C208680WA"/>
<dbReference type="CGD" id="CAL0000179035">
    <property type="gene designation" value="MSH3"/>
</dbReference>
<dbReference type="VEuPathDB" id="FungiDB:C2_08680W_A"/>
<dbReference type="eggNOG" id="KOG0218">
    <property type="taxonomic scope" value="Eukaryota"/>
</dbReference>
<dbReference type="HOGENOM" id="CLU_002472_0_2_1"/>
<dbReference type="InParanoid" id="Q59Y41"/>
<dbReference type="OrthoDB" id="121051at2759"/>
<dbReference type="PRO" id="PR:Q59Y41"/>
<dbReference type="Proteomes" id="UP000000559">
    <property type="component" value="Chromosome 2"/>
</dbReference>
<dbReference type="GO" id="GO:0005634">
    <property type="term" value="C:nucleus"/>
    <property type="evidence" value="ECO:0000318"/>
    <property type="project" value="GO_Central"/>
</dbReference>
<dbReference type="GO" id="GO:0005524">
    <property type="term" value="F:ATP binding"/>
    <property type="evidence" value="ECO:0007669"/>
    <property type="project" value="UniProtKB-KW"/>
</dbReference>
<dbReference type="GO" id="GO:0140664">
    <property type="term" value="F:ATP-dependent DNA damage sensor activity"/>
    <property type="evidence" value="ECO:0007669"/>
    <property type="project" value="InterPro"/>
</dbReference>
<dbReference type="GO" id="GO:0003690">
    <property type="term" value="F:double-stranded DNA binding"/>
    <property type="evidence" value="ECO:0000318"/>
    <property type="project" value="GO_Central"/>
</dbReference>
<dbReference type="GO" id="GO:0030983">
    <property type="term" value="F:mismatched DNA binding"/>
    <property type="evidence" value="ECO:0007669"/>
    <property type="project" value="InterPro"/>
</dbReference>
<dbReference type="GO" id="GO:0006298">
    <property type="term" value="P:mismatch repair"/>
    <property type="evidence" value="ECO:0000318"/>
    <property type="project" value="GO_Central"/>
</dbReference>
<dbReference type="GO" id="GO:0006312">
    <property type="term" value="P:mitotic recombination"/>
    <property type="evidence" value="ECO:0000318"/>
    <property type="project" value="GO_Central"/>
</dbReference>
<dbReference type="FunFam" id="3.30.420.110:FF:000061">
    <property type="entry name" value="DNA mismatch repair protein MSH3"/>
    <property type="match status" value="1"/>
</dbReference>
<dbReference type="FunFam" id="3.40.50.300:FF:003735">
    <property type="entry name" value="DNA mismatch repair protein MSH3"/>
    <property type="match status" value="1"/>
</dbReference>
<dbReference type="Gene3D" id="1.10.1420.10">
    <property type="match status" value="2"/>
</dbReference>
<dbReference type="Gene3D" id="3.40.1170.10">
    <property type="entry name" value="DNA repair protein MutS, domain I"/>
    <property type="match status" value="1"/>
</dbReference>
<dbReference type="Gene3D" id="3.30.420.110">
    <property type="entry name" value="MutS, connector domain"/>
    <property type="match status" value="1"/>
</dbReference>
<dbReference type="Gene3D" id="3.40.50.300">
    <property type="entry name" value="P-loop containing nucleotide triphosphate hydrolases"/>
    <property type="match status" value="1"/>
</dbReference>
<dbReference type="InterPro" id="IPR007695">
    <property type="entry name" value="DNA_mismatch_repair_MutS-lik_N"/>
</dbReference>
<dbReference type="InterPro" id="IPR017261">
    <property type="entry name" value="DNA_mismatch_repair_MutS/MSH"/>
</dbReference>
<dbReference type="InterPro" id="IPR000432">
    <property type="entry name" value="DNA_mismatch_repair_MutS_C"/>
</dbReference>
<dbReference type="InterPro" id="IPR007696">
    <property type="entry name" value="DNA_mismatch_repair_MutS_core"/>
</dbReference>
<dbReference type="InterPro" id="IPR016151">
    <property type="entry name" value="DNA_mismatch_repair_MutS_N"/>
</dbReference>
<dbReference type="InterPro" id="IPR036187">
    <property type="entry name" value="DNA_mismatch_repair_MutS_sf"/>
</dbReference>
<dbReference type="InterPro" id="IPR007860">
    <property type="entry name" value="DNA_mmatch_repair_MutS_con_dom"/>
</dbReference>
<dbReference type="InterPro" id="IPR045076">
    <property type="entry name" value="MutS"/>
</dbReference>
<dbReference type="InterPro" id="IPR036678">
    <property type="entry name" value="MutS_con_dom_sf"/>
</dbReference>
<dbReference type="InterPro" id="IPR027417">
    <property type="entry name" value="P-loop_NTPase"/>
</dbReference>
<dbReference type="PANTHER" id="PTHR11361:SF122">
    <property type="entry name" value="DNA MISMATCH REPAIR PROTEIN MSH3"/>
    <property type="match status" value="1"/>
</dbReference>
<dbReference type="PANTHER" id="PTHR11361">
    <property type="entry name" value="DNA MISMATCH REPAIR PROTEIN MUTS FAMILY MEMBER"/>
    <property type="match status" value="1"/>
</dbReference>
<dbReference type="Pfam" id="PF01624">
    <property type="entry name" value="MutS_I"/>
    <property type="match status" value="1"/>
</dbReference>
<dbReference type="Pfam" id="PF05188">
    <property type="entry name" value="MutS_II"/>
    <property type="match status" value="1"/>
</dbReference>
<dbReference type="Pfam" id="PF05192">
    <property type="entry name" value="MutS_III"/>
    <property type="match status" value="1"/>
</dbReference>
<dbReference type="Pfam" id="PF00488">
    <property type="entry name" value="MutS_V"/>
    <property type="match status" value="1"/>
</dbReference>
<dbReference type="PIRSF" id="PIRSF037677">
    <property type="entry name" value="DNA_mis_repair_Msh6"/>
    <property type="match status" value="1"/>
</dbReference>
<dbReference type="SMART" id="SM00534">
    <property type="entry name" value="MUTSac"/>
    <property type="match status" value="1"/>
</dbReference>
<dbReference type="SMART" id="SM00533">
    <property type="entry name" value="MUTSd"/>
    <property type="match status" value="1"/>
</dbReference>
<dbReference type="SUPFAM" id="SSF55271">
    <property type="entry name" value="DNA repair protein MutS, domain I"/>
    <property type="match status" value="1"/>
</dbReference>
<dbReference type="SUPFAM" id="SSF48334">
    <property type="entry name" value="DNA repair protein MutS, domain III"/>
    <property type="match status" value="1"/>
</dbReference>
<dbReference type="SUPFAM" id="SSF52540">
    <property type="entry name" value="P-loop containing nucleoside triphosphate hydrolases"/>
    <property type="match status" value="1"/>
</dbReference>
<dbReference type="PROSITE" id="PS00486">
    <property type="entry name" value="DNA_MISMATCH_REPAIR_2"/>
    <property type="match status" value="1"/>
</dbReference>
<evidence type="ECO:0000250" key="1"/>
<evidence type="ECO:0000255" key="2"/>
<evidence type="ECO:0000256" key="3">
    <source>
        <dbReference type="SAM" id="MobiDB-lite"/>
    </source>
</evidence>
<evidence type="ECO:0000305" key="4"/>
<feature type="chain" id="PRO_0000338515" description="DNA mismatch repair protein MSH3">
    <location>
        <begin position="1"/>
        <end position="1037"/>
    </location>
</feature>
<feature type="region of interest" description="Disordered" evidence="3">
    <location>
        <begin position="1"/>
        <end position="107"/>
    </location>
</feature>
<feature type="region of interest" description="Mispair-binding domain" evidence="1">
    <location>
        <begin position="102"/>
        <end position="221"/>
    </location>
</feature>
<feature type="region of interest" description="Disordered" evidence="3">
    <location>
        <begin position="229"/>
        <end position="249"/>
    </location>
</feature>
<feature type="compositionally biased region" description="Polar residues" evidence="3">
    <location>
        <begin position="1"/>
        <end position="30"/>
    </location>
</feature>
<feature type="compositionally biased region" description="Pro residues" evidence="3">
    <location>
        <begin position="36"/>
        <end position="47"/>
    </location>
</feature>
<feature type="compositionally biased region" description="Low complexity" evidence="3">
    <location>
        <begin position="66"/>
        <end position="75"/>
    </location>
</feature>
<feature type="compositionally biased region" description="Low complexity" evidence="3">
    <location>
        <begin position="86"/>
        <end position="96"/>
    </location>
</feature>
<feature type="binding site" evidence="2">
    <location>
        <begin position="800"/>
        <end position="807"/>
    </location>
    <ligand>
        <name>ATP</name>
        <dbReference type="ChEBI" id="CHEBI:30616"/>
    </ligand>
</feature>
<accession>Q59Y41</accession>
<accession>A0A1D8PI80</accession>
<name>MSH3_CANAL</name>
<sequence length="1037" mass="118896">MSSQKRQSTLSRFFTTIKPSQSTESTLTEKVSSKSPPLPPPPPPPTASPSLPSEKLLEFGFDGTKDSTSTRTTTTKSKDVEKRKSTTSSGSSFSSESKPKRPKEKRLTPLEKQILELTEQHQDKILLIQIGYKYKVFGINALKVSKILNIMYISNDIEDTRFHYCSIPDTRLHIHLQRILSHGYKVGVVKQIESTIVKQIEKTSKSSDVMRREVTGVYTKATYLGDESNENTKGSWDGLSSSSSSSSSDVPEYIVCINEVSEKQFAIVAVQPLIGEVIFDSFKDDISRQELETRLLYLRPVEVIVITNGSSEQISGPTLMTLKLINHNCNIIHKSGSPSENGNENENENENEAIEAIMSKYLNEKLVEYYSINFSIPIQQCFEYLLLYLNEFKLTNIFTIPENITNFQDSKKYMILPANTLNSLEIFTNTTDHTTKGSLFKLLNNTKTIFGSRLLQKWVSRPLVHIQDIKDRHQAIEDLQSEYNHVVDSISNFLTKIKYLDLEGLLSKIHYSSTNNNNNNLRINRKQVYLLLSNLQEILILVQKFEKSIKSFKFKSSLLIQIFDELLTISQTDIIIIENFLSMIDLSFIDCKESSEQCRKFFKRNSFDSIELQYQNIAQYQQQIEQEQLEIIRKELGNSKLKYVQKDGERYLIEIRNNQRDKLSKILDDKDYILIKSTQTITRYRKKSVTEYLKLLQYHEEMLIKTCDEEFQNFLKDLDSNYTLFYKIIKNLAIFDCLLSLTTTSSLPNYTRPTLIDDDLTILVKQARHPTIEQLRPNYVANDININIEYDKNRVLIITGPNMGGKSSYVKTVALLTVMTQIGCYLPCQNATMGIFDSIFIRMGANDNILKGYSTFMMEMLQCKNIISMMSNRSLIILDEIGRGTGTIDGISLAYSILKYLIESEFKPLVLFITHYPSIHVLEQEYPNQLVVNYHMGYQEIKNNTPGEIPEIIFLYNLCRGVVNNSYGLNVAKLAGISHDIIKQAYRVSEKVKSDIELKEYWKFAHSLNKALKEGGSSSPNQLDDIDYYILSKHSSL</sequence>
<keyword id="KW-0067">ATP-binding</keyword>
<keyword id="KW-0227">DNA damage</keyword>
<keyword id="KW-0234">DNA repair</keyword>
<keyword id="KW-0238">DNA-binding</keyword>
<keyword id="KW-0547">Nucleotide-binding</keyword>
<keyword id="KW-0539">Nucleus</keyword>
<keyword id="KW-1185">Reference proteome</keyword>
<reference key="1">
    <citation type="journal article" date="2004" name="Proc. Natl. Acad. Sci. U.S.A.">
        <title>The diploid genome sequence of Candida albicans.</title>
        <authorList>
            <person name="Jones T."/>
            <person name="Federspiel N.A."/>
            <person name="Chibana H."/>
            <person name="Dungan J."/>
            <person name="Kalman S."/>
            <person name="Magee B.B."/>
            <person name="Newport G."/>
            <person name="Thorstenson Y.R."/>
            <person name="Agabian N."/>
            <person name="Magee P.T."/>
            <person name="Davis R.W."/>
            <person name="Scherer S."/>
        </authorList>
    </citation>
    <scope>NUCLEOTIDE SEQUENCE [LARGE SCALE GENOMIC DNA]</scope>
    <source>
        <strain>SC5314 / ATCC MYA-2876</strain>
    </source>
</reference>
<reference key="2">
    <citation type="journal article" date="2007" name="Genome Biol.">
        <title>Assembly of the Candida albicans genome into sixteen supercontigs aligned on the eight chromosomes.</title>
        <authorList>
            <person name="van het Hoog M."/>
            <person name="Rast T.J."/>
            <person name="Martchenko M."/>
            <person name="Grindle S."/>
            <person name="Dignard D."/>
            <person name="Hogues H."/>
            <person name="Cuomo C."/>
            <person name="Berriman M."/>
            <person name="Scherer S."/>
            <person name="Magee B.B."/>
            <person name="Whiteway M."/>
            <person name="Chibana H."/>
            <person name="Nantel A."/>
            <person name="Magee P.T."/>
        </authorList>
    </citation>
    <scope>GENOME REANNOTATION</scope>
    <source>
        <strain>SC5314 / ATCC MYA-2876</strain>
    </source>
</reference>
<reference key="3">
    <citation type="journal article" date="2013" name="Genome Biol.">
        <title>Assembly of a phased diploid Candida albicans genome facilitates allele-specific measurements and provides a simple model for repeat and indel structure.</title>
        <authorList>
            <person name="Muzzey D."/>
            <person name="Schwartz K."/>
            <person name="Weissman J.S."/>
            <person name="Sherlock G."/>
        </authorList>
    </citation>
    <scope>NUCLEOTIDE SEQUENCE [LARGE SCALE GENOMIC DNA]</scope>
    <scope>GENOME REANNOTATION</scope>
    <source>
        <strain>SC5314 / ATCC MYA-2876</strain>
    </source>
</reference>
<proteinExistence type="inferred from homology"/>
<gene>
    <name type="primary">MSH3</name>
    <name type="ordered locus">CAALFM_C208680WA</name>
    <name type="ORF">CaO19.11091</name>
    <name type="ORF">CaO19.3608</name>
</gene>